<evidence type="ECO:0000255" key="1">
    <source>
        <dbReference type="HAMAP-Rule" id="MF_01306"/>
    </source>
</evidence>
<evidence type="ECO:0000256" key="2">
    <source>
        <dbReference type="SAM" id="MobiDB-lite"/>
    </source>
</evidence>
<evidence type="ECO:0000305" key="3"/>
<proteinExistence type="inferred from homology"/>
<comment type="function">
    <text evidence="1">One of the primary rRNA binding proteins, it binds directly to 16S rRNA where it nucleates assembly of the body of the 30S subunit.</text>
</comment>
<comment type="function">
    <text evidence="1">With S5 and S12 plays an important role in translational accuracy.</text>
</comment>
<comment type="subunit">
    <text evidence="1">Part of the 30S ribosomal subunit. Contacts protein S5. The interaction surface between S4 and S5 is involved in control of translational fidelity.</text>
</comment>
<comment type="similarity">
    <text evidence="1">Belongs to the universal ribosomal protein uS4 family.</text>
</comment>
<keyword id="KW-0687">Ribonucleoprotein</keyword>
<keyword id="KW-0689">Ribosomal protein</keyword>
<keyword id="KW-0694">RNA-binding</keyword>
<keyword id="KW-0699">rRNA-binding</keyword>
<dbReference type="EMBL" id="CP000239">
    <property type="protein sequence ID" value="ABC99684.1"/>
    <property type="molecule type" value="Genomic_DNA"/>
</dbReference>
<dbReference type="RefSeq" id="WP_011430362.1">
    <property type="nucleotide sequence ID" value="NC_007775.1"/>
</dbReference>
<dbReference type="SMR" id="Q2JUD6"/>
<dbReference type="STRING" id="321327.CYA_1519"/>
<dbReference type="KEGG" id="cya:CYA_1519"/>
<dbReference type="eggNOG" id="COG0522">
    <property type="taxonomic scope" value="Bacteria"/>
</dbReference>
<dbReference type="HOGENOM" id="CLU_092403_0_5_3"/>
<dbReference type="OrthoDB" id="9803672at2"/>
<dbReference type="Proteomes" id="UP000008818">
    <property type="component" value="Chromosome"/>
</dbReference>
<dbReference type="GO" id="GO:0015935">
    <property type="term" value="C:small ribosomal subunit"/>
    <property type="evidence" value="ECO:0007669"/>
    <property type="project" value="InterPro"/>
</dbReference>
<dbReference type="GO" id="GO:0019843">
    <property type="term" value="F:rRNA binding"/>
    <property type="evidence" value="ECO:0007669"/>
    <property type="project" value="UniProtKB-UniRule"/>
</dbReference>
<dbReference type="GO" id="GO:0003735">
    <property type="term" value="F:structural constituent of ribosome"/>
    <property type="evidence" value="ECO:0007669"/>
    <property type="project" value="InterPro"/>
</dbReference>
<dbReference type="GO" id="GO:0042274">
    <property type="term" value="P:ribosomal small subunit biogenesis"/>
    <property type="evidence" value="ECO:0007669"/>
    <property type="project" value="TreeGrafter"/>
</dbReference>
<dbReference type="GO" id="GO:0006412">
    <property type="term" value="P:translation"/>
    <property type="evidence" value="ECO:0007669"/>
    <property type="project" value="UniProtKB-UniRule"/>
</dbReference>
<dbReference type="CDD" id="cd00165">
    <property type="entry name" value="S4"/>
    <property type="match status" value="1"/>
</dbReference>
<dbReference type="FunFam" id="3.10.290.10:FF:000001">
    <property type="entry name" value="30S ribosomal protein S4"/>
    <property type="match status" value="1"/>
</dbReference>
<dbReference type="FunFam" id="1.10.1050.10:FF:000002">
    <property type="entry name" value="30S ribosomal protein S4, chloroplastic"/>
    <property type="match status" value="1"/>
</dbReference>
<dbReference type="Gene3D" id="1.10.1050.10">
    <property type="entry name" value="Ribosomal Protein S4 Delta 41, Chain A, domain 1"/>
    <property type="match status" value="1"/>
</dbReference>
<dbReference type="Gene3D" id="3.10.290.10">
    <property type="entry name" value="RNA-binding S4 domain"/>
    <property type="match status" value="1"/>
</dbReference>
<dbReference type="HAMAP" id="MF_01306_B">
    <property type="entry name" value="Ribosomal_uS4_B"/>
    <property type="match status" value="1"/>
</dbReference>
<dbReference type="InterPro" id="IPR022801">
    <property type="entry name" value="Ribosomal_uS4"/>
</dbReference>
<dbReference type="InterPro" id="IPR005709">
    <property type="entry name" value="Ribosomal_uS4_bac-type"/>
</dbReference>
<dbReference type="InterPro" id="IPR018079">
    <property type="entry name" value="Ribosomal_uS4_CS"/>
</dbReference>
<dbReference type="InterPro" id="IPR001912">
    <property type="entry name" value="Ribosomal_uS4_N"/>
</dbReference>
<dbReference type="InterPro" id="IPR002942">
    <property type="entry name" value="S4_RNA-bd"/>
</dbReference>
<dbReference type="InterPro" id="IPR036986">
    <property type="entry name" value="S4_RNA-bd_sf"/>
</dbReference>
<dbReference type="NCBIfam" id="NF003717">
    <property type="entry name" value="PRK05327.1"/>
    <property type="match status" value="1"/>
</dbReference>
<dbReference type="NCBIfam" id="TIGR01017">
    <property type="entry name" value="rpsD_bact"/>
    <property type="match status" value="1"/>
</dbReference>
<dbReference type="PANTHER" id="PTHR11831">
    <property type="entry name" value="30S 40S RIBOSOMAL PROTEIN"/>
    <property type="match status" value="1"/>
</dbReference>
<dbReference type="PANTHER" id="PTHR11831:SF4">
    <property type="entry name" value="SMALL RIBOSOMAL SUBUNIT PROTEIN US4M"/>
    <property type="match status" value="1"/>
</dbReference>
<dbReference type="Pfam" id="PF00163">
    <property type="entry name" value="Ribosomal_S4"/>
    <property type="match status" value="1"/>
</dbReference>
<dbReference type="Pfam" id="PF01479">
    <property type="entry name" value="S4"/>
    <property type="match status" value="1"/>
</dbReference>
<dbReference type="SMART" id="SM01390">
    <property type="entry name" value="Ribosomal_S4"/>
    <property type="match status" value="1"/>
</dbReference>
<dbReference type="SMART" id="SM00363">
    <property type="entry name" value="S4"/>
    <property type="match status" value="1"/>
</dbReference>
<dbReference type="SUPFAM" id="SSF55174">
    <property type="entry name" value="Alpha-L RNA-binding motif"/>
    <property type="match status" value="1"/>
</dbReference>
<dbReference type="PROSITE" id="PS00632">
    <property type="entry name" value="RIBOSOMAL_S4"/>
    <property type="match status" value="1"/>
</dbReference>
<dbReference type="PROSITE" id="PS50889">
    <property type="entry name" value="S4"/>
    <property type="match status" value="1"/>
</dbReference>
<reference key="1">
    <citation type="journal article" date="2007" name="ISME J.">
        <title>Population level functional diversity in a microbial community revealed by comparative genomic and metagenomic analyses.</title>
        <authorList>
            <person name="Bhaya D."/>
            <person name="Grossman A.R."/>
            <person name="Steunou A.-S."/>
            <person name="Khuri N."/>
            <person name="Cohan F.M."/>
            <person name="Hamamura N."/>
            <person name="Melendrez M.C."/>
            <person name="Bateson M.M."/>
            <person name="Ward D.M."/>
            <person name="Heidelberg J.F."/>
        </authorList>
    </citation>
    <scope>NUCLEOTIDE SEQUENCE [LARGE SCALE GENOMIC DNA]</scope>
    <source>
        <strain>JA-3-3Ab</strain>
    </source>
</reference>
<gene>
    <name evidence="1" type="primary">rpsD</name>
    <name evidence="1" type="synonym">rps4</name>
    <name type="ordered locus">CYA_1519</name>
</gene>
<protein>
    <recommendedName>
        <fullName evidence="1">Small ribosomal subunit protein uS4</fullName>
    </recommendedName>
    <alternativeName>
        <fullName evidence="3">30S ribosomal protein S4</fullName>
    </alternativeName>
</protein>
<sequence length="203" mass="23313">MSRYTGPRLKIIRRFGGLDLPGLTRKRPKNTNPPGMHGAERKKKSEYAIRLEEKQKVRLNYGVSERQMLRYMRKARRSKGSTGLALLQMLEMRLDCIVFRLGMAPTIPAARQLVSHGHIEVNGRKVTIPSYGCKVGDVITVRNKESSRKLVAAYAEYPGLFLPDYLEFDKEKLRGRIKELPPREQICAPVNELLVVEFYSRKL</sequence>
<organism>
    <name type="scientific">Synechococcus sp. (strain JA-3-3Ab)</name>
    <name type="common">Cyanobacteria bacterium Yellowstone A-Prime</name>
    <dbReference type="NCBI Taxonomy" id="321327"/>
    <lineage>
        <taxon>Bacteria</taxon>
        <taxon>Bacillati</taxon>
        <taxon>Cyanobacteriota</taxon>
        <taxon>Cyanophyceae</taxon>
        <taxon>Synechococcales</taxon>
        <taxon>Synechococcaceae</taxon>
        <taxon>Synechococcus</taxon>
    </lineage>
</organism>
<feature type="chain" id="PRO_0000293388" description="Small ribosomal subunit protein uS4">
    <location>
        <begin position="1"/>
        <end position="203"/>
    </location>
</feature>
<feature type="domain" description="S4 RNA-binding" evidence="1">
    <location>
        <begin position="92"/>
        <end position="155"/>
    </location>
</feature>
<feature type="region of interest" description="Disordered" evidence="2">
    <location>
        <begin position="20"/>
        <end position="45"/>
    </location>
</feature>
<name>RS4_SYNJA</name>
<accession>Q2JUD6</accession>